<reference key="1">
    <citation type="journal article" date="2003" name="Nat. Genet.">
        <title>Comparative analysis of the genome sequences of Bordetella pertussis, Bordetella parapertussis and Bordetella bronchiseptica.</title>
        <authorList>
            <person name="Parkhill J."/>
            <person name="Sebaihia M."/>
            <person name="Preston A."/>
            <person name="Murphy L.D."/>
            <person name="Thomson N.R."/>
            <person name="Harris D.E."/>
            <person name="Holden M.T.G."/>
            <person name="Churcher C.M."/>
            <person name="Bentley S.D."/>
            <person name="Mungall K.L."/>
            <person name="Cerdeno-Tarraga A.-M."/>
            <person name="Temple L."/>
            <person name="James K.D."/>
            <person name="Harris B."/>
            <person name="Quail M.A."/>
            <person name="Achtman M."/>
            <person name="Atkin R."/>
            <person name="Baker S."/>
            <person name="Basham D."/>
            <person name="Bason N."/>
            <person name="Cherevach I."/>
            <person name="Chillingworth T."/>
            <person name="Collins M."/>
            <person name="Cronin A."/>
            <person name="Davis P."/>
            <person name="Doggett J."/>
            <person name="Feltwell T."/>
            <person name="Goble A."/>
            <person name="Hamlin N."/>
            <person name="Hauser H."/>
            <person name="Holroyd S."/>
            <person name="Jagels K."/>
            <person name="Leather S."/>
            <person name="Moule S."/>
            <person name="Norberczak H."/>
            <person name="O'Neil S."/>
            <person name="Ormond D."/>
            <person name="Price C."/>
            <person name="Rabbinowitsch E."/>
            <person name="Rutter S."/>
            <person name="Sanders M."/>
            <person name="Saunders D."/>
            <person name="Seeger K."/>
            <person name="Sharp S."/>
            <person name="Simmonds M."/>
            <person name="Skelton J."/>
            <person name="Squares R."/>
            <person name="Squares S."/>
            <person name="Stevens K."/>
            <person name="Unwin L."/>
            <person name="Whitehead S."/>
            <person name="Barrell B.G."/>
            <person name="Maskell D.J."/>
        </authorList>
    </citation>
    <scope>NUCLEOTIDE SEQUENCE [LARGE SCALE GENOMIC DNA]</scope>
    <source>
        <strain>Tohama I / ATCC BAA-589 / NCTC 13251</strain>
    </source>
</reference>
<organism>
    <name type="scientific">Bordetella pertussis (strain Tohama I / ATCC BAA-589 / NCTC 13251)</name>
    <dbReference type="NCBI Taxonomy" id="257313"/>
    <lineage>
        <taxon>Bacteria</taxon>
        <taxon>Pseudomonadati</taxon>
        <taxon>Pseudomonadota</taxon>
        <taxon>Betaproteobacteria</taxon>
        <taxon>Burkholderiales</taxon>
        <taxon>Alcaligenaceae</taxon>
        <taxon>Bordetella</taxon>
    </lineage>
</organism>
<gene>
    <name evidence="1" type="primary">def1</name>
    <name type="ordered locus">BP0039</name>
</gene>
<feature type="chain" id="PRO_0000082749" description="Peptide deformylase 1">
    <location>
        <begin position="1"/>
        <end position="176"/>
    </location>
</feature>
<feature type="active site" evidence="1">
    <location>
        <position position="142"/>
    </location>
</feature>
<feature type="binding site" evidence="1">
    <location>
        <position position="99"/>
    </location>
    <ligand>
        <name>Fe cation</name>
        <dbReference type="ChEBI" id="CHEBI:24875"/>
    </ligand>
</feature>
<feature type="binding site" evidence="1">
    <location>
        <position position="141"/>
    </location>
    <ligand>
        <name>Fe cation</name>
        <dbReference type="ChEBI" id="CHEBI:24875"/>
    </ligand>
</feature>
<feature type="binding site" evidence="1">
    <location>
        <position position="145"/>
    </location>
    <ligand>
        <name>Fe cation</name>
        <dbReference type="ChEBI" id="CHEBI:24875"/>
    </ligand>
</feature>
<keyword id="KW-0378">Hydrolase</keyword>
<keyword id="KW-0408">Iron</keyword>
<keyword id="KW-0479">Metal-binding</keyword>
<keyword id="KW-0648">Protein biosynthesis</keyword>
<keyword id="KW-1185">Reference proteome</keyword>
<comment type="function">
    <text evidence="1">Removes the formyl group from the N-terminal Met of newly synthesized proteins. Requires at least a dipeptide for an efficient rate of reaction. N-terminal L-methionine is a prerequisite for activity but the enzyme has broad specificity at other positions.</text>
</comment>
<comment type="catalytic activity">
    <reaction evidence="1">
        <text>N-terminal N-formyl-L-methionyl-[peptide] + H2O = N-terminal L-methionyl-[peptide] + formate</text>
        <dbReference type="Rhea" id="RHEA:24420"/>
        <dbReference type="Rhea" id="RHEA-COMP:10639"/>
        <dbReference type="Rhea" id="RHEA-COMP:10640"/>
        <dbReference type="ChEBI" id="CHEBI:15377"/>
        <dbReference type="ChEBI" id="CHEBI:15740"/>
        <dbReference type="ChEBI" id="CHEBI:49298"/>
        <dbReference type="ChEBI" id="CHEBI:64731"/>
        <dbReference type="EC" id="3.5.1.88"/>
    </reaction>
</comment>
<comment type="cofactor">
    <cofactor evidence="1">
        <name>Fe(2+)</name>
        <dbReference type="ChEBI" id="CHEBI:29033"/>
    </cofactor>
    <text evidence="1">Binds 1 Fe(2+) ion.</text>
</comment>
<comment type="similarity">
    <text evidence="1">Belongs to the polypeptide deformylase family.</text>
</comment>
<dbReference type="EC" id="3.5.1.88" evidence="1"/>
<dbReference type="EMBL" id="BX640411">
    <property type="protein sequence ID" value="CAE40418.1"/>
    <property type="molecule type" value="Genomic_DNA"/>
</dbReference>
<dbReference type="RefSeq" id="NP_878953.1">
    <property type="nucleotide sequence ID" value="NC_002929.2"/>
</dbReference>
<dbReference type="SMR" id="Q7W0Q0"/>
<dbReference type="STRING" id="257313.BP0039"/>
<dbReference type="PaxDb" id="257313-BP0039"/>
<dbReference type="KEGG" id="bpe:BP0039"/>
<dbReference type="PATRIC" id="fig|257313.5.peg.41"/>
<dbReference type="eggNOG" id="COG0242">
    <property type="taxonomic scope" value="Bacteria"/>
</dbReference>
<dbReference type="HOGENOM" id="CLU_061901_5_2_4"/>
<dbReference type="Proteomes" id="UP000002676">
    <property type="component" value="Chromosome"/>
</dbReference>
<dbReference type="GO" id="GO:0046872">
    <property type="term" value="F:metal ion binding"/>
    <property type="evidence" value="ECO:0007669"/>
    <property type="project" value="UniProtKB-KW"/>
</dbReference>
<dbReference type="GO" id="GO:0042586">
    <property type="term" value="F:peptide deformylase activity"/>
    <property type="evidence" value="ECO:0007669"/>
    <property type="project" value="UniProtKB-UniRule"/>
</dbReference>
<dbReference type="GO" id="GO:0043686">
    <property type="term" value="P:co-translational protein modification"/>
    <property type="evidence" value="ECO:0007669"/>
    <property type="project" value="TreeGrafter"/>
</dbReference>
<dbReference type="GO" id="GO:0006412">
    <property type="term" value="P:translation"/>
    <property type="evidence" value="ECO:0007669"/>
    <property type="project" value="UniProtKB-UniRule"/>
</dbReference>
<dbReference type="CDD" id="cd00487">
    <property type="entry name" value="Pep_deformylase"/>
    <property type="match status" value="1"/>
</dbReference>
<dbReference type="FunFam" id="3.90.45.10:FF:000003">
    <property type="entry name" value="Peptide deformylase"/>
    <property type="match status" value="1"/>
</dbReference>
<dbReference type="Gene3D" id="3.90.45.10">
    <property type="entry name" value="Peptide deformylase"/>
    <property type="match status" value="1"/>
</dbReference>
<dbReference type="HAMAP" id="MF_00163">
    <property type="entry name" value="Pep_deformylase"/>
    <property type="match status" value="1"/>
</dbReference>
<dbReference type="InterPro" id="IPR023635">
    <property type="entry name" value="Peptide_deformylase"/>
</dbReference>
<dbReference type="InterPro" id="IPR036821">
    <property type="entry name" value="Peptide_deformylase_sf"/>
</dbReference>
<dbReference type="NCBIfam" id="TIGR00079">
    <property type="entry name" value="pept_deformyl"/>
    <property type="match status" value="1"/>
</dbReference>
<dbReference type="NCBIfam" id="NF001159">
    <property type="entry name" value="PRK00150.1-3"/>
    <property type="match status" value="1"/>
</dbReference>
<dbReference type="PANTHER" id="PTHR10458">
    <property type="entry name" value="PEPTIDE DEFORMYLASE"/>
    <property type="match status" value="1"/>
</dbReference>
<dbReference type="PANTHER" id="PTHR10458:SF20">
    <property type="entry name" value="PEPTIDE DEFORMYLASE 1"/>
    <property type="match status" value="1"/>
</dbReference>
<dbReference type="Pfam" id="PF01327">
    <property type="entry name" value="Pep_deformylase"/>
    <property type="match status" value="1"/>
</dbReference>
<dbReference type="PIRSF" id="PIRSF004749">
    <property type="entry name" value="Pep_def"/>
    <property type="match status" value="1"/>
</dbReference>
<dbReference type="PRINTS" id="PR01576">
    <property type="entry name" value="PDEFORMYLASE"/>
</dbReference>
<dbReference type="SUPFAM" id="SSF56420">
    <property type="entry name" value="Peptide deformylase"/>
    <property type="match status" value="1"/>
</dbReference>
<name>DEF1_BORPE</name>
<accession>Q7W0Q0</accession>
<evidence type="ECO:0000255" key="1">
    <source>
        <dbReference type="HAMAP-Rule" id="MF_00163"/>
    </source>
</evidence>
<sequence length="176" mass="19939">MIHAILKMGDPRLLRVAAPVERYDTPELRALIDDMFETMAHAQGVGLAAPQIGVDLQLVIFGFERNDRYPDAPAVPRTILCNPVIEPLSDEMEDGWEGCLSVPGLRGLVPRYRHIRYSGYDPAGQRIEREAEGFHARVVQHECDHLIGRLYPTRIRDLTKFGYTEVLFPEMDPNAD</sequence>
<proteinExistence type="inferred from homology"/>
<protein>
    <recommendedName>
        <fullName evidence="1">Peptide deformylase 1</fullName>
        <shortName evidence="1">PDF 1</shortName>
        <ecNumber evidence="1">3.5.1.88</ecNumber>
    </recommendedName>
    <alternativeName>
        <fullName evidence="1">Polypeptide deformylase 1</fullName>
    </alternativeName>
</protein>